<comment type="catalytic activity">
    <reaction evidence="1">
        <text>tRNA(Phe) + L-phenylalanine + ATP = L-phenylalanyl-tRNA(Phe) + AMP + diphosphate + H(+)</text>
        <dbReference type="Rhea" id="RHEA:19413"/>
        <dbReference type="Rhea" id="RHEA-COMP:9668"/>
        <dbReference type="Rhea" id="RHEA-COMP:9699"/>
        <dbReference type="ChEBI" id="CHEBI:15378"/>
        <dbReference type="ChEBI" id="CHEBI:30616"/>
        <dbReference type="ChEBI" id="CHEBI:33019"/>
        <dbReference type="ChEBI" id="CHEBI:58095"/>
        <dbReference type="ChEBI" id="CHEBI:78442"/>
        <dbReference type="ChEBI" id="CHEBI:78531"/>
        <dbReference type="ChEBI" id="CHEBI:456215"/>
        <dbReference type="EC" id="6.1.1.20"/>
    </reaction>
</comment>
<comment type="cofactor">
    <cofactor evidence="1">
        <name>Mg(2+)</name>
        <dbReference type="ChEBI" id="CHEBI:18420"/>
    </cofactor>
    <text evidence="1">Binds 2 magnesium ions per tetramer.</text>
</comment>
<comment type="subunit">
    <text evidence="1">Tetramer of two alpha and two beta subunits.</text>
</comment>
<comment type="subcellular location">
    <subcellularLocation>
        <location>Plastid</location>
        <location>Chloroplast</location>
    </subcellularLocation>
</comment>
<comment type="similarity">
    <text evidence="1">Belongs to the phenylalanyl-tRNA synthetase beta subunit family. Type 1 subfamily.</text>
</comment>
<geneLocation type="chloroplast"/>
<dbReference type="EC" id="6.1.1.20" evidence="1"/>
<dbReference type="EMBL" id="EF067920">
    <property type="protein sequence ID" value="ABK20672.1"/>
    <property type="molecule type" value="Genomic_DNA"/>
</dbReference>
<dbReference type="SMR" id="A0T0H4"/>
<dbReference type="STRING" id="556484.A0T0H4"/>
<dbReference type="InParanoid" id="A0T0H4"/>
<dbReference type="Proteomes" id="UP000000759">
    <property type="component" value="Chloroplast"/>
</dbReference>
<dbReference type="GO" id="GO:0009507">
    <property type="term" value="C:chloroplast"/>
    <property type="evidence" value="ECO:0007669"/>
    <property type="project" value="UniProtKB-SubCell"/>
</dbReference>
<dbReference type="GO" id="GO:0009328">
    <property type="term" value="C:phenylalanine-tRNA ligase complex"/>
    <property type="evidence" value="ECO:0007669"/>
    <property type="project" value="TreeGrafter"/>
</dbReference>
<dbReference type="GO" id="GO:0005524">
    <property type="term" value="F:ATP binding"/>
    <property type="evidence" value="ECO:0007669"/>
    <property type="project" value="UniProtKB-UniRule"/>
</dbReference>
<dbReference type="GO" id="GO:0000287">
    <property type="term" value="F:magnesium ion binding"/>
    <property type="evidence" value="ECO:0007669"/>
    <property type="project" value="UniProtKB-UniRule"/>
</dbReference>
<dbReference type="GO" id="GO:0004826">
    <property type="term" value="F:phenylalanine-tRNA ligase activity"/>
    <property type="evidence" value="ECO:0007669"/>
    <property type="project" value="UniProtKB-UniRule"/>
</dbReference>
<dbReference type="GO" id="GO:0003723">
    <property type="term" value="F:RNA binding"/>
    <property type="evidence" value="ECO:0007669"/>
    <property type="project" value="InterPro"/>
</dbReference>
<dbReference type="GO" id="GO:0006432">
    <property type="term" value="P:phenylalanyl-tRNA aminoacylation"/>
    <property type="evidence" value="ECO:0007669"/>
    <property type="project" value="UniProtKB-UniRule"/>
</dbReference>
<dbReference type="CDD" id="cd00769">
    <property type="entry name" value="PheRS_beta_core"/>
    <property type="match status" value="1"/>
</dbReference>
<dbReference type="Gene3D" id="3.30.56.10">
    <property type="match status" value="2"/>
</dbReference>
<dbReference type="Gene3D" id="3.30.930.10">
    <property type="entry name" value="Bira Bifunctional Protein, Domain 2"/>
    <property type="match status" value="1"/>
</dbReference>
<dbReference type="Gene3D" id="3.30.70.380">
    <property type="entry name" value="Ferrodoxin-fold anticodon-binding domain"/>
    <property type="match status" value="1"/>
</dbReference>
<dbReference type="Gene3D" id="3.50.40.10">
    <property type="entry name" value="Phenylalanyl-trna Synthetase, Chain B, domain 3"/>
    <property type="match status" value="1"/>
</dbReference>
<dbReference type="HAMAP" id="MF_00283">
    <property type="entry name" value="Phe_tRNA_synth_beta1"/>
    <property type="match status" value="1"/>
</dbReference>
<dbReference type="InterPro" id="IPR045864">
    <property type="entry name" value="aa-tRNA-synth_II/BPL/LPL"/>
</dbReference>
<dbReference type="InterPro" id="IPR005146">
    <property type="entry name" value="B3/B4_tRNA-bd"/>
</dbReference>
<dbReference type="InterPro" id="IPR009061">
    <property type="entry name" value="DNA-bd_dom_put_sf"/>
</dbReference>
<dbReference type="InterPro" id="IPR005121">
    <property type="entry name" value="Fdx_antiC-bd"/>
</dbReference>
<dbReference type="InterPro" id="IPR036690">
    <property type="entry name" value="Fdx_antiC-bd_sf"/>
</dbReference>
<dbReference type="InterPro" id="IPR045060">
    <property type="entry name" value="Phe-tRNA-ligase_IIc_bsu"/>
</dbReference>
<dbReference type="InterPro" id="IPR004532">
    <property type="entry name" value="Phe-tRNA-ligase_IIc_bsu_bact"/>
</dbReference>
<dbReference type="InterPro" id="IPR020825">
    <property type="entry name" value="Phe-tRNA_synthase-like_B3/B4"/>
</dbReference>
<dbReference type="InterPro" id="IPR041616">
    <property type="entry name" value="PheRS_beta_core"/>
</dbReference>
<dbReference type="InterPro" id="IPR005147">
    <property type="entry name" value="tRNA_synthase_B5-dom"/>
</dbReference>
<dbReference type="NCBIfam" id="TIGR00472">
    <property type="entry name" value="pheT_bact"/>
    <property type="match status" value="1"/>
</dbReference>
<dbReference type="PANTHER" id="PTHR10947:SF0">
    <property type="entry name" value="PHENYLALANINE--TRNA LIGASE BETA SUBUNIT"/>
    <property type="match status" value="1"/>
</dbReference>
<dbReference type="PANTHER" id="PTHR10947">
    <property type="entry name" value="PHENYLALANYL-TRNA SYNTHETASE BETA CHAIN AND LEUCINE-RICH REPEAT-CONTAINING PROTEIN 47"/>
    <property type="match status" value="1"/>
</dbReference>
<dbReference type="Pfam" id="PF03483">
    <property type="entry name" value="B3_4"/>
    <property type="match status" value="1"/>
</dbReference>
<dbReference type="Pfam" id="PF03484">
    <property type="entry name" value="B5"/>
    <property type="match status" value="1"/>
</dbReference>
<dbReference type="Pfam" id="PF03147">
    <property type="entry name" value="FDX-ACB"/>
    <property type="match status" value="1"/>
</dbReference>
<dbReference type="Pfam" id="PF17759">
    <property type="entry name" value="tRNA_synthFbeta"/>
    <property type="match status" value="1"/>
</dbReference>
<dbReference type="SMART" id="SM00873">
    <property type="entry name" value="B3_4"/>
    <property type="match status" value="1"/>
</dbReference>
<dbReference type="SMART" id="SM00874">
    <property type="entry name" value="B5"/>
    <property type="match status" value="1"/>
</dbReference>
<dbReference type="SMART" id="SM00896">
    <property type="entry name" value="FDX-ACB"/>
    <property type="match status" value="1"/>
</dbReference>
<dbReference type="SUPFAM" id="SSF54991">
    <property type="entry name" value="Anticodon-binding domain of PheRS"/>
    <property type="match status" value="1"/>
</dbReference>
<dbReference type="SUPFAM" id="SSF55681">
    <property type="entry name" value="Class II aaRS and biotin synthetases"/>
    <property type="match status" value="1"/>
</dbReference>
<dbReference type="SUPFAM" id="SSF56037">
    <property type="entry name" value="PheT/TilS domain"/>
    <property type="match status" value="1"/>
</dbReference>
<dbReference type="SUPFAM" id="SSF46955">
    <property type="entry name" value="Putative DNA-binding domain"/>
    <property type="match status" value="2"/>
</dbReference>
<dbReference type="PROSITE" id="PS51483">
    <property type="entry name" value="B5"/>
    <property type="match status" value="1"/>
</dbReference>
<dbReference type="PROSITE" id="PS51447">
    <property type="entry name" value="FDX_ACB"/>
    <property type="match status" value="1"/>
</dbReference>
<keyword id="KW-0030">Aminoacyl-tRNA synthetase</keyword>
<keyword id="KW-0067">ATP-binding</keyword>
<keyword id="KW-0150">Chloroplast</keyword>
<keyword id="KW-0436">Ligase</keyword>
<keyword id="KW-0460">Magnesium</keyword>
<keyword id="KW-0479">Metal-binding</keyword>
<keyword id="KW-0547">Nucleotide-binding</keyword>
<keyword id="KW-0934">Plastid</keyword>
<keyword id="KW-0648">Protein biosynthesis</keyword>
<keyword id="KW-1185">Reference proteome</keyword>
<accession>A0T0H4</accession>
<gene>
    <name evidence="1" type="primary">pheT</name>
</gene>
<evidence type="ECO:0000255" key="1">
    <source>
        <dbReference type="HAMAP-Rule" id="MF_00283"/>
    </source>
</evidence>
<feature type="chain" id="PRO_0000277248" description="Phenylalanine--tRNA ligase beta subunit, chloroplastic">
    <location>
        <begin position="1"/>
        <end position="706"/>
    </location>
</feature>
<feature type="domain" description="B5" evidence="1">
    <location>
        <begin position="300"/>
        <end position="388"/>
    </location>
</feature>
<feature type="domain" description="FDX-ACB" evidence="1">
    <location>
        <begin position="612"/>
        <end position="705"/>
    </location>
</feature>
<feature type="binding site" evidence="1">
    <location>
        <position position="366"/>
    </location>
    <ligand>
        <name>Mg(2+)</name>
        <dbReference type="ChEBI" id="CHEBI:18420"/>
        <note>shared with alpha subunit</note>
    </ligand>
</feature>
<feature type="binding site" evidence="1">
    <location>
        <position position="372"/>
    </location>
    <ligand>
        <name>Mg(2+)</name>
        <dbReference type="ChEBI" id="CHEBI:18420"/>
        <note>shared with alpha subunit</note>
    </ligand>
</feature>
<feature type="binding site" evidence="1">
    <location>
        <position position="375"/>
    </location>
    <ligand>
        <name>Mg(2+)</name>
        <dbReference type="ChEBI" id="CHEBI:18420"/>
        <note>shared with alpha subunit</note>
    </ligand>
</feature>
<feature type="binding site" evidence="1">
    <location>
        <position position="376"/>
    </location>
    <ligand>
        <name>Mg(2+)</name>
        <dbReference type="ChEBI" id="CHEBI:18420"/>
        <note>shared with alpha subunit</note>
    </ligand>
</feature>
<proteinExistence type="inferred from homology"/>
<reference key="1">
    <citation type="journal article" date="2007" name="Mol. Genet. Genomics">
        <title>Chloroplast genomes of the diatoms Phaeodactylum tricornutum and Thalassiosira pseudonana: comparison with other plastid genomes of the red lineage.</title>
        <authorList>
            <person name="Oudot-Le Secq M.-P."/>
            <person name="Grimwood J."/>
            <person name="Shapiro H."/>
            <person name="Armbrust E.V."/>
            <person name="Bowler C."/>
            <person name="Green B.R."/>
        </authorList>
    </citation>
    <scope>NUCLEOTIDE SEQUENCE [LARGE SCALE GENOMIC DNA]</scope>
    <source>
        <strain>CCAP 1055/1</strain>
    </source>
</reference>
<organism>
    <name type="scientific">Phaeodactylum tricornutum (strain CCAP 1055/1)</name>
    <dbReference type="NCBI Taxonomy" id="556484"/>
    <lineage>
        <taxon>Eukaryota</taxon>
        <taxon>Sar</taxon>
        <taxon>Stramenopiles</taxon>
        <taxon>Ochrophyta</taxon>
        <taxon>Bacillariophyta</taxon>
        <taxon>Bacillariophyceae</taxon>
        <taxon>Bacillariophycidae</taxon>
        <taxon>Naviculales</taxon>
        <taxon>Phaeodactylaceae</taxon>
        <taxon>Phaeodactylum</taxon>
    </lineage>
</organism>
<sequence length="706" mass="81082">MQISLKWIKELIDIENVDLDDLIEKLTLGGFEVEEILELEINNEKQIALEISSTANRSDSLSIQGISVEIASLFNKQPKVCKYFNSSLNWQQKIKNLTTIRTSKTECLMFTAVILEGLEDLTVPKWIQNKLVSSGIMPLNNLVDFQNYILLETGYPFAFYDLDKVYSKVRTPTFSLSIEKAENGSEFFASNQINYKLDNSIFLVQANNIPISIAGIIENDEIICHSKTSSLLIEGSIFSASKIRQQSRKLAIRTDRSARYEKSLKSTYLIEALYRLISLLRISNPSLVYKFHSSNKVLEKVLKPIVLNYKTIVEILGPIKKRTNEHLIYISPETVTDYLKRLNFKFLFDSSTLNWEVTIPSIRSDDITREIDLIEEVGRLHGFNNFLTMLPQIKSVGRADFSYQTRKKITSYLLNMGLTELIHYSLVSNETFLKNEIKLVNPLLSDCSTLRVSLLPSLLMTIQENLKQGNSILEGFEYGHVFSGNIETTLTEIEYVGGIFGGTKIKSSWFEKGQSLKWFEAKGKIEKLFQQLNLGIHWRINSQTYTKKFLHPYRSAEIFLSSGKNIGVFGQLHPLLANKLGLSSEIYLFELNLELIQQSLQQNKLTIYSQYSVYPKIVKDLSFIIKKNIKFDELEKIIYANGTEFLSQINLLDDYKGEFIPEKHTSLCLQLTFQSNKKTLENKEIDRIVKNLKRVLELKVQAILRE</sequence>
<name>SYFB_PHATC</name>
<protein>
    <recommendedName>
        <fullName evidence="1">Phenylalanine--tRNA ligase beta subunit, chloroplastic</fullName>
        <ecNumber evidence="1">6.1.1.20</ecNumber>
    </recommendedName>
    <alternativeName>
        <fullName evidence="1">Phenylalanyl-tRNA synthetase beta subunit</fullName>
        <shortName evidence="1">PheRS</shortName>
    </alternativeName>
</protein>